<organism>
    <name type="scientific">Phocaeicola vulgatus (strain ATCC 8482 / DSM 1447 / JCM 5826 / CCUG 4940 / NBRC 14291 / NCTC 11154)</name>
    <name type="common">Bacteroides vulgatus</name>
    <dbReference type="NCBI Taxonomy" id="435590"/>
    <lineage>
        <taxon>Bacteria</taxon>
        <taxon>Pseudomonadati</taxon>
        <taxon>Bacteroidota</taxon>
        <taxon>Bacteroidia</taxon>
        <taxon>Bacteroidales</taxon>
        <taxon>Bacteroidaceae</taxon>
        <taxon>Phocaeicola</taxon>
    </lineage>
</organism>
<accession>A6KWD5</accession>
<reference key="1">
    <citation type="journal article" date="2007" name="PLoS Biol.">
        <title>Evolution of symbiotic bacteria in the distal human intestine.</title>
        <authorList>
            <person name="Xu J."/>
            <person name="Mahowald M.A."/>
            <person name="Ley R.E."/>
            <person name="Lozupone C.A."/>
            <person name="Hamady M."/>
            <person name="Martens E.C."/>
            <person name="Henrissat B."/>
            <person name="Coutinho P.M."/>
            <person name="Minx P."/>
            <person name="Latreille P."/>
            <person name="Cordum H."/>
            <person name="Van Brunt A."/>
            <person name="Kim K."/>
            <person name="Fulton R.S."/>
            <person name="Fulton L.A."/>
            <person name="Clifton S.W."/>
            <person name="Wilson R.K."/>
            <person name="Knight R.D."/>
            <person name="Gordon J.I."/>
        </authorList>
    </citation>
    <scope>NUCLEOTIDE SEQUENCE [LARGE SCALE GENOMIC DNA]</scope>
    <source>
        <strain>ATCC 8482 / DSM 1447 / JCM 5826 / CCUG 4940 / NBRC 14291 / NCTC 11154</strain>
    </source>
</reference>
<protein>
    <recommendedName>
        <fullName evidence="1">Large ribosomal subunit protein bL9</fullName>
    </recommendedName>
    <alternativeName>
        <fullName evidence="2">50S ribosomal protein L9</fullName>
    </alternativeName>
</protein>
<gene>
    <name evidence="1" type="primary">rplI</name>
    <name type="ordered locus">BVU_0011</name>
</gene>
<proteinExistence type="inferred from homology"/>
<keyword id="KW-0687">Ribonucleoprotein</keyword>
<keyword id="KW-0689">Ribosomal protein</keyword>
<keyword id="KW-0694">RNA-binding</keyword>
<keyword id="KW-0699">rRNA-binding</keyword>
<feature type="chain" id="PRO_1000014741" description="Large ribosomal subunit protein bL9">
    <location>
        <begin position="1"/>
        <end position="147"/>
    </location>
</feature>
<sequence>MEIILKEDVVNLGYKNDIVTVKSGYGRNYLIPTGKAVIASPSAKKMLAEELKQRAHKLEKIKKDAEAMAEQLKDVTLTIATKVSATGTIFGSVSNIQIAEELEKLGHKVDRKIIVVKDAVKEVGSYKAIVKLHKEVSVEIPFEVVAE</sequence>
<dbReference type="EMBL" id="CP000139">
    <property type="protein sequence ID" value="ABR37741.1"/>
    <property type="molecule type" value="Genomic_DNA"/>
</dbReference>
<dbReference type="RefSeq" id="WP_005841179.1">
    <property type="nucleotide sequence ID" value="NZ_JANSWM010000070.1"/>
</dbReference>
<dbReference type="SMR" id="A6KWD5"/>
<dbReference type="STRING" id="435590.BVU_0011"/>
<dbReference type="PaxDb" id="435590-BVU_0011"/>
<dbReference type="GeneID" id="5300981"/>
<dbReference type="KEGG" id="bvu:BVU_0011"/>
<dbReference type="eggNOG" id="COG0359">
    <property type="taxonomic scope" value="Bacteria"/>
</dbReference>
<dbReference type="HOGENOM" id="CLU_078938_3_0_10"/>
<dbReference type="BioCyc" id="BVUL435590:G1G59-12-MONOMER"/>
<dbReference type="Proteomes" id="UP000002861">
    <property type="component" value="Chromosome"/>
</dbReference>
<dbReference type="GO" id="GO:1990904">
    <property type="term" value="C:ribonucleoprotein complex"/>
    <property type="evidence" value="ECO:0007669"/>
    <property type="project" value="UniProtKB-KW"/>
</dbReference>
<dbReference type="GO" id="GO:0005840">
    <property type="term" value="C:ribosome"/>
    <property type="evidence" value="ECO:0007669"/>
    <property type="project" value="UniProtKB-KW"/>
</dbReference>
<dbReference type="GO" id="GO:0019843">
    <property type="term" value="F:rRNA binding"/>
    <property type="evidence" value="ECO:0007669"/>
    <property type="project" value="UniProtKB-UniRule"/>
</dbReference>
<dbReference type="GO" id="GO:0003735">
    <property type="term" value="F:structural constituent of ribosome"/>
    <property type="evidence" value="ECO:0007669"/>
    <property type="project" value="InterPro"/>
</dbReference>
<dbReference type="GO" id="GO:0006412">
    <property type="term" value="P:translation"/>
    <property type="evidence" value="ECO:0007669"/>
    <property type="project" value="UniProtKB-UniRule"/>
</dbReference>
<dbReference type="FunFam" id="3.10.430.100:FF:000006">
    <property type="entry name" value="50S ribosomal protein L9"/>
    <property type="match status" value="1"/>
</dbReference>
<dbReference type="FunFam" id="3.40.5.10:FF:000004">
    <property type="entry name" value="50S ribosomal protein L9"/>
    <property type="match status" value="1"/>
</dbReference>
<dbReference type="Gene3D" id="3.10.430.100">
    <property type="entry name" value="Ribosomal protein L9, C-terminal domain"/>
    <property type="match status" value="1"/>
</dbReference>
<dbReference type="Gene3D" id="3.40.5.10">
    <property type="entry name" value="Ribosomal protein L9, N-terminal domain"/>
    <property type="match status" value="1"/>
</dbReference>
<dbReference type="HAMAP" id="MF_00503">
    <property type="entry name" value="Ribosomal_bL9"/>
    <property type="match status" value="1"/>
</dbReference>
<dbReference type="InterPro" id="IPR000244">
    <property type="entry name" value="Ribosomal_bL9"/>
</dbReference>
<dbReference type="InterPro" id="IPR009027">
    <property type="entry name" value="Ribosomal_bL9/RNase_H1_N"/>
</dbReference>
<dbReference type="InterPro" id="IPR020594">
    <property type="entry name" value="Ribosomal_bL9_bac/chp"/>
</dbReference>
<dbReference type="InterPro" id="IPR020069">
    <property type="entry name" value="Ribosomal_bL9_C"/>
</dbReference>
<dbReference type="InterPro" id="IPR036791">
    <property type="entry name" value="Ribosomal_bL9_C_sf"/>
</dbReference>
<dbReference type="InterPro" id="IPR020070">
    <property type="entry name" value="Ribosomal_bL9_N"/>
</dbReference>
<dbReference type="InterPro" id="IPR036935">
    <property type="entry name" value="Ribosomal_bL9_N_sf"/>
</dbReference>
<dbReference type="NCBIfam" id="TIGR00158">
    <property type="entry name" value="L9"/>
    <property type="match status" value="1"/>
</dbReference>
<dbReference type="PANTHER" id="PTHR21368">
    <property type="entry name" value="50S RIBOSOMAL PROTEIN L9"/>
    <property type="match status" value="1"/>
</dbReference>
<dbReference type="Pfam" id="PF03948">
    <property type="entry name" value="Ribosomal_L9_C"/>
    <property type="match status" value="1"/>
</dbReference>
<dbReference type="Pfam" id="PF01281">
    <property type="entry name" value="Ribosomal_L9_N"/>
    <property type="match status" value="1"/>
</dbReference>
<dbReference type="SUPFAM" id="SSF55658">
    <property type="entry name" value="L9 N-domain-like"/>
    <property type="match status" value="1"/>
</dbReference>
<dbReference type="SUPFAM" id="SSF55653">
    <property type="entry name" value="Ribosomal protein L9 C-domain"/>
    <property type="match status" value="1"/>
</dbReference>
<dbReference type="PROSITE" id="PS00651">
    <property type="entry name" value="RIBOSOMAL_L9"/>
    <property type="match status" value="1"/>
</dbReference>
<evidence type="ECO:0000255" key="1">
    <source>
        <dbReference type="HAMAP-Rule" id="MF_00503"/>
    </source>
</evidence>
<evidence type="ECO:0000305" key="2"/>
<name>RL9_PHOV8</name>
<comment type="function">
    <text evidence="1">Binds to the 23S rRNA.</text>
</comment>
<comment type="similarity">
    <text evidence="1">Belongs to the bacterial ribosomal protein bL9 family.</text>
</comment>